<name>DAPB_KLEPN</name>
<sequence>MHDAQIRVAIAGAGGRMGRQLIQAALQMEGVALGAALEREGSSLVGSDAGELAGAGKAGVAVQSSLAAVKDDFDVLIDFTRPEGTLNHLAFCREHGKGMVIGTTGFDDAGKQAIRDAAQDIAIVFAANFSVGVNVLLKLLEKAAKVMGDYTDIEIIEAHHRHKVDAPSGTALAMGEAIAGALNKD</sequence>
<reference key="1">
    <citation type="journal article" date="1994" name="Mol. Microbiol.">
        <title>Klebsiella pneumoniae genes for citrate lyase and citrate lyase ligase: localization, sequencing, and expression.</title>
        <authorList>
            <person name="Bott M."/>
            <person name="Dimroth P."/>
        </authorList>
    </citation>
    <scope>NUCLEOTIDE SEQUENCE [GENOMIC DNA]</scope>
    <source>
        <strain>ATCC 13882 / NBRC 13541 / NCTC 8172</strain>
    </source>
</reference>
<keyword id="KW-0028">Amino-acid biosynthesis</keyword>
<keyword id="KW-0963">Cytoplasm</keyword>
<keyword id="KW-0220">Diaminopimelate biosynthesis</keyword>
<keyword id="KW-0457">Lysine biosynthesis</keyword>
<keyword id="KW-0520">NAD</keyword>
<keyword id="KW-0521">NADP</keyword>
<keyword id="KW-0560">Oxidoreductase</keyword>
<feature type="chain" id="PRO_0000141447" description="4-hydroxy-tetrahydrodipicolinate reductase">
    <location>
        <begin position="1"/>
        <end position="185" status="greater than"/>
    </location>
</feature>
<feature type="active site" description="Proton donor/acceptor" evidence="1">
    <location>
        <position position="159"/>
    </location>
</feature>
<feature type="active site" description="Proton donor" evidence="1">
    <location>
        <position position="163"/>
    </location>
</feature>
<feature type="binding site" evidence="1">
    <location>
        <begin position="12"/>
        <end position="17"/>
    </location>
    <ligand>
        <name>NAD(+)</name>
        <dbReference type="ChEBI" id="CHEBI:57540"/>
    </ligand>
</feature>
<feature type="binding site" evidence="1">
    <location>
        <position position="38"/>
    </location>
    <ligand>
        <name>NAD(+)</name>
        <dbReference type="ChEBI" id="CHEBI:57540"/>
    </ligand>
</feature>
<feature type="binding site" evidence="1">
    <location>
        <position position="39"/>
    </location>
    <ligand>
        <name>NADP(+)</name>
        <dbReference type="ChEBI" id="CHEBI:58349"/>
    </ligand>
</feature>
<feature type="binding site" evidence="1">
    <location>
        <begin position="102"/>
        <end position="104"/>
    </location>
    <ligand>
        <name>NAD(+)</name>
        <dbReference type="ChEBI" id="CHEBI:57540"/>
    </ligand>
</feature>
<feature type="binding site" evidence="1">
    <location>
        <begin position="126"/>
        <end position="129"/>
    </location>
    <ligand>
        <name>NAD(+)</name>
        <dbReference type="ChEBI" id="CHEBI:57540"/>
    </ligand>
</feature>
<feature type="binding site" evidence="1">
    <location>
        <position position="160"/>
    </location>
    <ligand>
        <name>(S)-2,3,4,5-tetrahydrodipicolinate</name>
        <dbReference type="ChEBI" id="CHEBI:16845"/>
    </ligand>
</feature>
<feature type="binding site" evidence="1">
    <location>
        <begin position="169"/>
        <end position="170"/>
    </location>
    <ligand>
        <name>(S)-2,3,4,5-tetrahydrodipicolinate</name>
        <dbReference type="ChEBI" id="CHEBI:16845"/>
    </ligand>
</feature>
<feature type="non-terminal residue">
    <location>
        <position position="185"/>
    </location>
</feature>
<dbReference type="EC" id="1.17.1.8"/>
<dbReference type="EMBL" id="X79817">
    <property type="protein sequence ID" value="CAA56219.1"/>
    <property type="molecule type" value="Genomic_DNA"/>
</dbReference>
<dbReference type="PIR" id="S60778">
    <property type="entry name" value="S60778"/>
</dbReference>
<dbReference type="SMR" id="P45415"/>
<dbReference type="UniPathway" id="UPA00034">
    <property type="reaction ID" value="UER00018"/>
</dbReference>
<dbReference type="GO" id="GO:0005829">
    <property type="term" value="C:cytosol"/>
    <property type="evidence" value="ECO:0007669"/>
    <property type="project" value="TreeGrafter"/>
</dbReference>
<dbReference type="GO" id="GO:0008839">
    <property type="term" value="F:4-hydroxy-tetrahydrodipicolinate reductase"/>
    <property type="evidence" value="ECO:0007669"/>
    <property type="project" value="UniProtKB-EC"/>
</dbReference>
<dbReference type="GO" id="GO:0019877">
    <property type="term" value="P:diaminopimelate biosynthetic process"/>
    <property type="evidence" value="ECO:0007669"/>
    <property type="project" value="UniProtKB-KW"/>
</dbReference>
<dbReference type="GO" id="GO:0009089">
    <property type="term" value="P:lysine biosynthetic process via diaminopimelate"/>
    <property type="evidence" value="ECO:0007669"/>
    <property type="project" value="UniProtKB-UniPathway"/>
</dbReference>
<dbReference type="CDD" id="cd02274">
    <property type="entry name" value="DHDPR_N"/>
    <property type="match status" value="1"/>
</dbReference>
<dbReference type="FunFam" id="3.40.50.720:FF:000048">
    <property type="entry name" value="4-hydroxy-tetrahydrodipicolinate reductase"/>
    <property type="match status" value="1"/>
</dbReference>
<dbReference type="Gene3D" id="3.30.360.10">
    <property type="entry name" value="Dihydrodipicolinate Reductase, domain 2"/>
    <property type="match status" value="1"/>
</dbReference>
<dbReference type="Gene3D" id="3.40.50.720">
    <property type="entry name" value="NAD(P)-binding Rossmann-like Domain"/>
    <property type="match status" value="1"/>
</dbReference>
<dbReference type="InterPro" id="IPR022663">
    <property type="entry name" value="DapB_C"/>
</dbReference>
<dbReference type="InterPro" id="IPR000846">
    <property type="entry name" value="DapB_N"/>
</dbReference>
<dbReference type="InterPro" id="IPR022664">
    <property type="entry name" value="DapB_N_CS"/>
</dbReference>
<dbReference type="InterPro" id="IPR023940">
    <property type="entry name" value="DHDPR_bac"/>
</dbReference>
<dbReference type="InterPro" id="IPR036291">
    <property type="entry name" value="NAD(P)-bd_dom_sf"/>
</dbReference>
<dbReference type="NCBIfam" id="TIGR00036">
    <property type="entry name" value="dapB"/>
    <property type="match status" value="1"/>
</dbReference>
<dbReference type="PANTHER" id="PTHR20836:SF0">
    <property type="entry name" value="4-HYDROXY-TETRAHYDRODIPICOLINATE REDUCTASE 1, CHLOROPLASTIC-RELATED"/>
    <property type="match status" value="1"/>
</dbReference>
<dbReference type="PANTHER" id="PTHR20836">
    <property type="entry name" value="DIHYDRODIPICOLINATE REDUCTASE"/>
    <property type="match status" value="1"/>
</dbReference>
<dbReference type="Pfam" id="PF05173">
    <property type="entry name" value="DapB_C"/>
    <property type="match status" value="1"/>
</dbReference>
<dbReference type="Pfam" id="PF01113">
    <property type="entry name" value="DapB_N"/>
    <property type="match status" value="1"/>
</dbReference>
<dbReference type="SUPFAM" id="SSF51735">
    <property type="entry name" value="NAD(P)-binding Rossmann-fold domains"/>
    <property type="match status" value="1"/>
</dbReference>
<dbReference type="PROSITE" id="PS01298">
    <property type="entry name" value="DAPB"/>
    <property type="match status" value="1"/>
</dbReference>
<proteinExistence type="inferred from homology"/>
<protein>
    <recommendedName>
        <fullName>4-hydroxy-tetrahydrodipicolinate reductase</fullName>
        <shortName>HTPA reductase</shortName>
        <ecNumber>1.17.1.8</ecNumber>
    </recommendedName>
</protein>
<gene>
    <name type="primary">dapB</name>
</gene>
<organism>
    <name type="scientific">Klebsiella pneumoniae</name>
    <dbReference type="NCBI Taxonomy" id="573"/>
    <lineage>
        <taxon>Bacteria</taxon>
        <taxon>Pseudomonadati</taxon>
        <taxon>Pseudomonadota</taxon>
        <taxon>Gammaproteobacteria</taxon>
        <taxon>Enterobacterales</taxon>
        <taxon>Enterobacteriaceae</taxon>
        <taxon>Klebsiella/Raoultella group</taxon>
        <taxon>Klebsiella</taxon>
        <taxon>Klebsiella pneumoniae complex</taxon>
    </lineage>
</organism>
<comment type="function">
    <text evidence="1">Catalyzes the conversion of 4-hydroxy-tetrahydrodipicolinate (HTPA) to tetrahydrodipicolinate.</text>
</comment>
<comment type="catalytic activity">
    <reaction>
        <text>(S)-2,3,4,5-tetrahydrodipicolinate + NAD(+) + H2O = (2S,4S)-4-hydroxy-2,3,4,5-tetrahydrodipicolinate + NADH + H(+)</text>
        <dbReference type="Rhea" id="RHEA:35323"/>
        <dbReference type="ChEBI" id="CHEBI:15377"/>
        <dbReference type="ChEBI" id="CHEBI:15378"/>
        <dbReference type="ChEBI" id="CHEBI:16845"/>
        <dbReference type="ChEBI" id="CHEBI:57540"/>
        <dbReference type="ChEBI" id="CHEBI:57945"/>
        <dbReference type="ChEBI" id="CHEBI:67139"/>
        <dbReference type="EC" id="1.17.1.8"/>
    </reaction>
</comment>
<comment type="catalytic activity">
    <reaction>
        <text>(S)-2,3,4,5-tetrahydrodipicolinate + NADP(+) + H2O = (2S,4S)-4-hydroxy-2,3,4,5-tetrahydrodipicolinate + NADPH + H(+)</text>
        <dbReference type="Rhea" id="RHEA:35331"/>
        <dbReference type="ChEBI" id="CHEBI:15377"/>
        <dbReference type="ChEBI" id="CHEBI:15378"/>
        <dbReference type="ChEBI" id="CHEBI:16845"/>
        <dbReference type="ChEBI" id="CHEBI:57783"/>
        <dbReference type="ChEBI" id="CHEBI:58349"/>
        <dbReference type="ChEBI" id="CHEBI:67139"/>
        <dbReference type="EC" id="1.17.1.8"/>
    </reaction>
</comment>
<comment type="pathway">
    <text>Amino-acid biosynthesis; L-lysine biosynthesis via DAP pathway; (S)-tetrahydrodipicolinate from L-aspartate: step 4/4.</text>
</comment>
<comment type="subunit">
    <text evidence="1">Homotetramer.</text>
</comment>
<comment type="subcellular location">
    <subcellularLocation>
        <location evidence="1">Cytoplasm</location>
    </subcellularLocation>
</comment>
<comment type="similarity">
    <text evidence="2">Belongs to the DapB family.</text>
</comment>
<comment type="caution">
    <text evidence="2">Was originally thought to be a dihydrodipicolinate reductase (DHDPR), catalyzing the conversion of dihydrodipicolinate to tetrahydrodipicolinate. However, it was shown in E.coli that the substrate of the enzymatic reaction is not dihydrodipicolinate (DHDP) but in fact (2S,4S)-4-hydroxy-2,3,4,5-tetrahydrodipicolinic acid (HTPA), the product released by the DapA-catalyzed reaction.</text>
</comment>
<evidence type="ECO:0000250" key="1"/>
<evidence type="ECO:0000305" key="2"/>
<accession>P45415</accession>